<organism>
    <name type="scientific">Conus striatus</name>
    <name type="common">Striated cone</name>
    <dbReference type="NCBI Taxonomy" id="6493"/>
    <lineage>
        <taxon>Eukaryota</taxon>
        <taxon>Metazoa</taxon>
        <taxon>Spiralia</taxon>
        <taxon>Lophotrochozoa</taxon>
        <taxon>Mollusca</taxon>
        <taxon>Gastropoda</taxon>
        <taxon>Caenogastropoda</taxon>
        <taxon>Neogastropoda</taxon>
        <taxon>Conoidea</taxon>
        <taxon>Conidae</taxon>
        <taxon>Conus</taxon>
        <taxon>Pionoconus</taxon>
    </lineage>
</organism>
<reference key="1">
    <citation type="journal article" date="2004" name="Toxicon">
        <title>Novel conopeptides of the I-superfamily occur in several clades of cone snails.</title>
        <authorList>
            <person name="Kauferstein S."/>
            <person name="Huys I."/>
            <person name="Kuch U."/>
            <person name="Melaun C."/>
            <person name="Tytgat J."/>
            <person name="Mebs D."/>
        </authorList>
    </citation>
    <scope>NUCLEOTIDE SEQUENCE [MRNA]</scope>
    <source>
        <tissue>Venom duct</tissue>
    </source>
</reference>
<feature type="signal peptide" evidence="3">
    <location>
        <begin position="1"/>
        <end position="26"/>
    </location>
</feature>
<feature type="chain" id="PRO_0000035114" description="conotoxin S11.3">
    <location>
        <begin position="27"/>
        <end position="60"/>
    </location>
</feature>
<feature type="propeptide" id="PRO_0000035115" evidence="1">
    <location>
        <begin position="64"/>
        <end position="68"/>
    </location>
</feature>
<feature type="modified residue" description="Tyrosine amide" evidence="1">
    <location>
        <position position="60"/>
    </location>
</feature>
<feature type="disulfide bond" evidence="2">
    <location>
        <begin position="29"/>
        <end position="43"/>
    </location>
</feature>
<feature type="disulfide bond" evidence="2">
    <location>
        <begin position="36"/>
        <end position="48"/>
    </location>
</feature>
<feature type="disulfide bond" evidence="2">
    <location>
        <begin position="42"/>
        <end position="52"/>
    </location>
</feature>
<feature type="disulfide bond" evidence="2">
    <location>
        <begin position="47"/>
        <end position="56"/>
    </location>
</feature>
<dbReference type="EMBL" id="AJ746188">
    <property type="protein sequence ID" value="CAG34096.1"/>
    <property type="molecule type" value="mRNA"/>
</dbReference>
<dbReference type="SMR" id="P69499"/>
<dbReference type="ConoServer" id="1391">
    <property type="toxin name" value="S11.3 precursor"/>
</dbReference>
<dbReference type="GO" id="GO:0005576">
    <property type="term" value="C:extracellular region"/>
    <property type="evidence" value="ECO:0007669"/>
    <property type="project" value="UniProtKB-SubCell"/>
</dbReference>
<dbReference type="GO" id="GO:0090729">
    <property type="term" value="F:toxin activity"/>
    <property type="evidence" value="ECO:0007669"/>
    <property type="project" value="UniProtKB-KW"/>
</dbReference>
<dbReference type="InterPro" id="IPR013141">
    <property type="entry name" value="Conotoxin-I_CS"/>
</dbReference>
<dbReference type="InterPro" id="IPR020242">
    <property type="entry name" value="Conotoxin_I2"/>
</dbReference>
<dbReference type="Pfam" id="PF17557">
    <property type="entry name" value="Conotoxin_I2"/>
    <property type="match status" value="1"/>
</dbReference>
<dbReference type="PROSITE" id="PS60019">
    <property type="entry name" value="I_CONOTOXIN"/>
    <property type="match status" value="1"/>
</dbReference>
<protein>
    <recommendedName>
        <fullName>conotoxin S11.3</fullName>
    </recommendedName>
</protein>
<sequence>MMFRLTSVSCFLLVIVCLNLFQVVLTRRCVPPSRYCTRHRPCCRGTCCSGLCRPMCNLWYGKRATFQE</sequence>
<comment type="subcellular location">
    <subcellularLocation>
        <location evidence="1">Secreted</location>
    </subcellularLocation>
</comment>
<comment type="tissue specificity">
    <text>Expressed by the venom duct.</text>
</comment>
<comment type="domain">
    <text>The cysteine framework is XI (C-C-CC-CC-C-C).</text>
</comment>
<comment type="similarity">
    <text evidence="4">Belongs to the conotoxin I2 superfamily.</text>
</comment>
<accession>P69499</accession>
<accession>Q59AA5</accession>
<keyword id="KW-0027">Amidation</keyword>
<keyword id="KW-0165">Cleavage on pair of basic residues</keyword>
<keyword id="KW-1015">Disulfide bond</keyword>
<keyword id="KW-0964">Secreted</keyword>
<keyword id="KW-0732">Signal</keyword>
<keyword id="KW-0800">Toxin</keyword>
<proteinExistence type="evidence at transcript level"/>
<name>I2_CONST</name>
<evidence type="ECO:0000250" key="1"/>
<evidence type="ECO:0000250" key="2">
    <source>
        <dbReference type="UniProtKB" id="Q7Z094"/>
    </source>
</evidence>
<evidence type="ECO:0000255" key="3"/>
<evidence type="ECO:0000305" key="4"/>